<comment type="function">
    <text evidence="1">Catalyzes the trans-addition of the three molecules of IPP onto DMAPP to form geranylgeranyl pyrophosphate.</text>
</comment>
<comment type="catalytic activity">
    <reaction>
        <text>isopentenyl diphosphate + dimethylallyl diphosphate = (2E)-geranyl diphosphate + diphosphate</text>
        <dbReference type="Rhea" id="RHEA:22408"/>
        <dbReference type="ChEBI" id="CHEBI:33019"/>
        <dbReference type="ChEBI" id="CHEBI:57623"/>
        <dbReference type="ChEBI" id="CHEBI:58057"/>
        <dbReference type="ChEBI" id="CHEBI:128769"/>
        <dbReference type="EC" id="2.5.1.1"/>
    </reaction>
</comment>
<comment type="catalytic activity">
    <reaction>
        <text>isopentenyl diphosphate + (2E)-geranyl diphosphate = (2E,6E)-farnesyl diphosphate + diphosphate</text>
        <dbReference type="Rhea" id="RHEA:19361"/>
        <dbReference type="ChEBI" id="CHEBI:33019"/>
        <dbReference type="ChEBI" id="CHEBI:58057"/>
        <dbReference type="ChEBI" id="CHEBI:128769"/>
        <dbReference type="ChEBI" id="CHEBI:175763"/>
        <dbReference type="EC" id="2.5.1.10"/>
    </reaction>
</comment>
<comment type="catalytic activity">
    <reaction>
        <text>isopentenyl diphosphate + (2E,6E)-farnesyl diphosphate = (2E,6E,10E)-geranylgeranyl diphosphate + diphosphate</text>
        <dbReference type="Rhea" id="RHEA:17653"/>
        <dbReference type="ChEBI" id="CHEBI:33019"/>
        <dbReference type="ChEBI" id="CHEBI:58756"/>
        <dbReference type="ChEBI" id="CHEBI:128769"/>
        <dbReference type="ChEBI" id="CHEBI:175763"/>
        <dbReference type="EC" id="2.5.1.29"/>
    </reaction>
</comment>
<comment type="cofactor">
    <cofactor evidence="1">
        <name>Mg(2+)</name>
        <dbReference type="ChEBI" id="CHEBI:18420"/>
    </cofactor>
    <text evidence="1">Binds 2 Mg(2+) ions per subunit.</text>
</comment>
<comment type="pathway">
    <text>Isoprenoid biosynthesis; farnesyl diphosphate biosynthesis; farnesyl diphosphate from geranyl diphosphate and isopentenyl diphosphate: step 1/1.</text>
</comment>
<comment type="pathway">
    <text>Isoprenoid biosynthesis; geranyl diphosphate biosynthesis; geranyl diphosphate from dimethylallyl diphosphate and isopentenyl diphosphate: step 1/1.</text>
</comment>
<comment type="pathway">
    <text>Isoprenoid biosynthesis; geranylgeranyl diphosphate biosynthesis; geranylgeranyl diphosphate from farnesyl diphosphate and isopentenyl diphosphate: step 1/1.</text>
</comment>
<comment type="subunit">
    <text evidence="1">Monomer.</text>
</comment>
<comment type="subcellular location">
    <subcellularLocation>
        <location evidence="5">Mitochondrion</location>
    </subcellularLocation>
</comment>
<comment type="similarity">
    <text evidence="5">Belongs to the FPP/GGPP synthase family.</text>
</comment>
<comment type="sequence caution" evidence="5">
    <conflict type="erroneous termination">
        <sequence resource="EMBL-CDS" id="ABK28565"/>
    </conflict>
    <text>Extended C-terminus.</text>
</comment>
<sequence length="344" mass="38087">MENREVFVYIVISIFRSLQFLFWRFRPRYNDVTSALTRPLTSAASYDFKFMSYMVNKAKSVNKALEEAVPLREPELKIREAMRYTLLSDGKRVRPMLCLAACELVGGQESTAMSAACAIEMLHASSLILDDLPCMDNDSLRRGKPTNHIVFGESIAILASQALIALAVQKTTSSTFADVPPERILKTVQEMVKAVEGLVAGQQADLAGEGMRFDSDTGLEHLEFIHIHKTAALLEAAAVMGAIMGGGSDEEIERLRSYARCIGLMFQVVDDVLDVTKSSEELGKTAGKDLIAGKLTYPRLMGVEKSKEYAERLNIEAREHLLGFDIDKVAPLVSLADYIVNRQN</sequence>
<name>GGPPA_ARATH</name>
<protein>
    <recommendedName>
        <fullName>Geranylgeranyl pyrophosphate synthase 10, mitochondrial</fullName>
        <shortName>GGPP synthase 10</shortName>
        <shortName>GGPS10</shortName>
        <ecNumber>2.5.1.-</ecNumber>
    </recommendedName>
    <alternativeName>
        <fullName>(2E,6E)-farnesyl diphosphate synthase 10</fullName>
    </alternativeName>
    <alternativeName>
        <fullName>Dimethylallyltranstransferase 10</fullName>
        <ecNumber>2.5.1.1</ecNumber>
    </alternativeName>
    <alternativeName>
        <fullName>Farnesyl diphosphate synthase 10</fullName>
    </alternativeName>
    <alternativeName>
        <fullName>Farnesyltranstransferase 10</fullName>
        <ecNumber>2.5.1.29</ecNumber>
    </alternativeName>
    <alternativeName>
        <fullName>Geranyltranstransferase 10</fullName>
        <ecNumber>2.5.1.10</ecNumber>
    </alternativeName>
</protein>
<proteinExistence type="evidence at protein level"/>
<keyword id="KW-0002">3D-structure</keyword>
<keyword id="KW-0125">Carotenoid biosynthesis</keyword>
<keyword id="KW-0414">Isoprene biosynthesis</keyword>
<keyword id="KW-0460">Magnesium</keyword>
<keyword id="KW-0479">Metal-binding</keyword>
<keyword id="KW-0496">Mitochondrion</keyword>
<keyword id="KW-1185">Reference proteome</keyword>
<keyword id="KW-0808">Transferase</keyword>
<keyword id="KW-0809">Transit peptide</keyword>
<evidence type="ECO:0000250" key="1"/>
<evidence type="ECO:0000250" key="2">
    <source>
        <dbReference type="UniProtKB" id="P14324"/>
    </source>
</evidence>
<evidence type="ECO:0000250" key="3">
    <source>
        <dbReference type="UniProtKB" id="Q12051"/>
    </source>
</evidence>
<evidence type="ECO:0000255" key="4"/>
<evidence type="ECO:0000305" key="5"/>
<evidence type="ECO:0007829" key="6">
    <source>
        <dbReference type="PDB" id="5E8K"/>
    </source>
</evidence>
<gene>
    <name type="ordered locus">At3g20160</name>
    <name type="ORF">MAL21.19</name>
</gene>
<accession>Q9LJY2</accession>
<accession>A0MEX3</accession>
<organism>
    <name type="scientific">Arabidopsis thaliana</name>
    <name type="common">Mouse-ear cress</name>
    <dbReference type="NCBI Taxonomy" id="3702"/>
    <lineage>
        <taxon>Eukaryota</taxon>
        <taxon>Viridiplantae</taxon>
        <taxon>Streptophyta</taxon>
        <taxon>Embryophyta</taxon>
        <taxon>Tracheophyta</taxon>
        <taxon>Spermatophyta</taxon>
        <taxon>Magnoliopsida</taxon>
        <taxon>eudicotyledons</taxon>
        <taxon>Gunneridae</taxon>
        <taxon>Pentapetalae</taxon>
        <taxon>rosids</taxon>
        <taxon>malvids</taxon>
        <taxon>Brassicales</taxon>
        <taxon>Brassicaceae</taxon>
        <taxon>Camelineae</taxon>
        <taxon>Arabidopsis</taxon>
    </lineage>
</organism>
<dbReference type="EC" id="2.5.1.-"/>
<dbReference type="EC" id="2.5.1.1"/>
<dbReference type="EC" id="2.5.1.29"/>
<dbReference type="EC" id="2.5.1.10"/>
<dbReference type="EMBL" id="AP000383">
    <property type="protein sequence ID" value="BAB01876.1"/>
    <property type="molecule type" value="Genomic_DNA"/>
</dbReference>
<dbReference type="EMBL" id="CP002686">
    <property type="protein sequence ID" value="AEE76342.1"/>
    <property type="molecule type" value="Genomic_DNA"/>
</dbReference>
<dbReference type="EMBL" id="DQ446678">
    <property type="protein sequence ID" value="ABE65951.1"/>
    <property type="molecule type" value="mRNA"/>
</dbReference>
<dbReference type="EMBL" id="DQ653096">
    <property type="protein sequence ID" value="ABK28565.1"/>
    <property type="status" value="ALT_SEQ"/>
    <property type="molecule type" value="mRNA"/>
</dbReference>
<dbReference type="RefSeq" id="NP_188651.1">
    <property type="nucleotide sequence ID" value="NM_112907.2"/>
</dbReference>
<dbReference type="PDB" id="5E8K">
    <property type="method" value="X-ray"/>
    <property type="resolution" value="3.03 A"/>
    <property type="chains" value="A/B=41-344"/>
</dbReference>
<dbReference type="PDBsum" id="5E8K"/>
<dbReference type="SMR" id="Q9LJY2"/>
<dbReference type="FunCoup" id="Q9LJY2">
    <property type="interactions" value="17"/>
</dbReference>
<dbReference type="STRING" id="3702.Q9LJY2"/>
<dbReference type="PaxDb" id="3702-AT3G20160.1"/>
<dbReference type="ProteomicsDB" id="224785"/>
<dbReference type="EnsemblPlants" id="AT3G20160.1">
    <property type="protein sequence ID" value="AT3G20160.1"/>
    <property type="gene ID" value="AT3G20160"/>
</dbReference>
<dbReference type="GeneID" id="821560"/>
<dbReference type="Gramene" id="AT3G20160.1">
    <property type="protein sequence ID" value="AT3G20160.1"/>
    <property type="gene ID" value="AT3G20160"/>
</dbReference>
<dbReference type="KEGG" id="ath:AT3G20160"/>
<dbReference type="Araport" id="AT3G20160"/>
<dbReference type="TAIR" id="AT3G20160">
    <property type="gene designation" value="PPPS2"/>
</dbReference>
<dbReference type="eggNOG" id="KOG0776">
    <property type="taxonomic scope" value="Eukaryota"/>
</dbReference>
<dbReference type="HOGENOM" id="CLU_014015_0_0_1"/>
<dbReference type="InParanoid" id="Q9LJY2"/>
<dbReference type="OMA" id="EGMIGGQ"/>
<dbReference type="PhylomeDB" id="Q9LJY2"/>
<dbReference type="BioCyc" id="ARA:AT3G20160-MONOMER"/>
<dbReference type="UniPathway" id="UPA00259">
    <property type="reaction ID" value="UER00368"/>
</dbReference>
<dbReference type="UniPathway" id="UPA00260">
    <property type="reaction ID" value="UER00369"/>
</dbReference>
<dbReference type="UniPathway" id="UPA00389">
    <property type="reaction ID" value="UER00564"/>
</dbReference>
<dbReference type="PRO" id="PR:Q9LJY2"/>
<dbReference type="Proteomes" id="UP000006548">
    <property type="component" value="Chromosome 3"/>
</dbReference>
<dbReference type="ExpressionAtlas" id="Q9LJY2">
    <property type="expression patterns" value="baseline and differential"/>
</dbReference>
<dbReference type="GO" id="GO:0009507">
    <property type="term" value="C:chloroplast"/>
    <property type="evidence" value="ECO:0000314"/>
    <property type="project" value="TAIR"/>
</dbReference>
<dbReference type="GO" id="GO:0005739">
    <property type="term" value="C:mitochondrion"/>
    <property type="evidence" value="ECO:0007669"/>
    <property type="project" value="UniProtKB-SubCell"/>
</dbReference>
<dbReference type="GO" id="GO:0004337">
    <property type="term" value="F:(2E,6E)-farnesyl diphosphate synthase activity"/>
    <property type="evidence" value="ECO:0007669"/>
    <property type="project" value="UniProtKB-EC"/>
</dbReference>
<dbReference type="GO" id="GO:0004161">
    <property type="term" value="F:dimethylallyltranstransferase activity"/>
    <property type="evidence" value="ECO:0007669"/>
    <property type="project" value="UniProtKB-EC"/>
</dbReference>
<dbReference type="GO" id="GO:0004311">
    <property type="term" value="F:geranylgeranyl diphosphate synthase activity"/>
    <property type="evidence" value="ECO:0000250"/>
    <property type="project" value="TAIR"/>
</dbReference>
<dbReference type="GO" id="GO:0046872">
    <property type="term" value="F:metal ion binding"/>
    <property type="evidence" value="ECO:0007669"/>
    <property type="project" value="UniProtKB-KW"/>
</dbReference>
<dbReference type="GO" id="GO:0016117">
    <property type="term" value="P:carotenoid biosynthetic process"/>
    <property type="evidence" value="ECO:0007669"/>
    <property type="project" value="UniProtKB-KW"/>
</dbReference>
<dbReference type="GO" id="GO:0045337">
    <property type="term" value="P:farnesyl diphosphate biosynthetic process"/>
    <property type="evidence" value="ECO:0007669"/>
    <property type="project" value="UniProtKB-UniPathway"/>
</dbReference>
<dbReference type="GO" id="GO:0033384">
    <property type="term" value="P:geranyl diphosphate biosynthetic process"/>
    <property type="evidence" value="ECO:0007669"/>
    <property type="project" value="UniProtKB-UniPathway"/>
</dbReference>
<dbReference type="GO" id="GO:0033386">
    <property type="term" value="P:geranylgeranyl diphosphate biosynthetic process"/>
    <property type="evidence" value="ECO:0007669"/>
    <property type="project" value="UniProtKB-UniPathway"/>
</dbReference>
<dbReference type="CDD" id="cd00685">
    <property type="entry name" value="Trans_IPPS_HT"/>
    <property type="match status" value="1"/>
</dbReference>
<dbReference type="FunFam" id="1.10.600.10:FF:000001">
    <property type="entry name" value="Geranylgeranyl diphosphate synthase"/>
    <property type="match status" value="1"/>
</dbReference>
<dbReference type="Gene3D" id="1.10.600.10">
    <property type="entry name" value="Farnesyl Diphosphate Synthase"/>
    <property type="match status" value="1"/>
</dbReference>
<dbReference type="InterPro" id="IPR008949">
    <property type="entry name" value="Isoprenoid_synthase_dom_sf"/>
</dbReference>
<dbReference type="InterPro" id="IPR000092">
    <property type="entry name" value="Polyprenyl_synt"/>
</dbReference>
<dbReference type="InterPro" id="IPR033749">
    <property type="entry name" value="Polyprenyl_synt_CS"/>
</dbReference>
<dbReference type="InterPro" id="IPR053378">
    <property type="entry name" value="Prenyl_diphosphate_synthase"/>
</dbReference>
<dbReference type="NCBIfam" id="NF045485">
    <property type="entry name" value="FPPsyn"/>
    <property type="match status" value="1"/>
</dbReference>
<dbReference type="PANTHER" id="PTHR43281">
    <property type="entry name" value="FARNESYL DIPHOSPHATE SYNTHASE"/>
    <property type="match status" value="1"/>
</dbReference>
<dbReference type="PANTHER" id="PTHR43281:SF20">
    <property type="entry name" value="GERANYLGERANYL PYROPHOSPHATE SYNTHASE 10, MITOCHONDRIAL"/>
    <property type="match status" value="1"/>
</dbReference>
<dbReference type="Pfam" id="PF00348">
    <property type="entry name" value="polyprenyl_synt"/>
    <property type="match status" value="1"/>
</dbReference>
<dbReference type="SFLD" id="SFLDS00005">
    <property type="entry name" value="Isoprenoid_Synthase_Type_I"/>
    <property type="match status" value="1"/>
</dbReference>
<dbReference type="SFLD" id="SFLDG01017">
    <property type="entry name" value="Polyprenyl_Transferase_Like"/>
    <property type="match status" value="1"/>
</dbReference>
<dbReference type="SUPFAM" id="SSF48576">
    <property type="entry name" value="Terpenoid synthases"/>
    <property type="match status" value="1"/>
</dbReference>
<dbReference type="PROSITE" id="PS00723">
    <property type="entry name" value="POLYPRENYL_SYNTHASE_1"/>
    <property type="match status" value="1"/>
</dbReference>
<dbReference type="PROSITE" id="PS00444">
    <property type="entry name" value="POLYPRENYL_SYNTHASE_2"/>
    <property type="match status" value="1"/>
</dbReference>
<feature type="transit peptide" description="Mitochondrion" evidence="4">
    <location>
        <begin position="1"/>
        <end position="40"/>
    </location>
</feature>
<feature type="chain" id="PRO_0000402124" description="Geranylgeranyl pyrophosphate synthase 10, mitochondrial">
    <location>
        <begin position="41"/>
        <end position="344"/>
    </location>
</feature>
<feature type="binding site" evidence="2">
    <location>
        <position position="91"/>
    </location>
    <ligand>
        <name>isopentenyl diphosphate</name>
        <dbReference type="ChEBI" id="CHEBI:128769"/>
    </ligand>
</feature>
<feature type="binding site" evidence="2">
    <location>
        <position position="94"/>
    </location>
    <ligand>
        <name>isopentenyl diphosphate</name>
        <dbReference type="ChEBI" id="CHEBI:128769"/>
    </ligand>
</feature>
<feature type="binding site" evidence="3">
    <location>
        <position position="123"/>
    </location>
    <ligand>
        <name>isopentenyl diphosphate</name>
        <dbReference type="ChEBI" id="CHEBI:128769"/>
    </ligand>
</feature>
<feature type="binding site" evidence="2">
    <location>
        <position position="130"/>
    </location>
    <ligand>
        <name>Mg(2+)</name>
        <dbReference type="ChEBI" id="CHEBI:18420"/>
        <label>1</label>
    </ligand>
</feature>
<feature type="binding site" evidence="2">
    <location>
        <position position="130"/>
    </location>
    <ligand>
        <name>Mg(2+)</name>
        <dbReference type="ChEBI" id="CHEBI:18420"/>
        <label>2</label>
    </ligand>
</feature>
<feature type="binding site" evidence="2">
    <location>
        <position position="136"/>
    </location>
    <ligand>
        <name>Mg(2+)</name>
        <dbReference type="ChEBI" id="CHEBI:18420"/>
        <label>1</label>
    </ligand>
</feature>
<feature type="binding site" evidence="2">
    <location>
        <position position="136"/>
    </location>
    <ligand>
        <name>Mg(2+)</name>
        <dbReference type="ChEBI" id="CHEBI:18420"/>
        <label>2</label>
    </ligand>
</feature>
<feature type="binding site" evidence="1">
    <location>
        <position position="141"/>
    </location>
    <ligand>
        <name>dimethylallyl diphosphate</name>
        <dbReference type="ChEBI" id="CHEBI:57623"/>
    </ligand>
</feature>
<feature type="binding site" evidence="2">
    <location>
        <position position="142"/>
    </location>
    <ligand>
        <name>isopentenyl diphosphate</name>
        <dbReference type="ChEBI" id="CHEBI:128769"/>
    </ligand>
</feature>
<feature type="binding site" evidence="1">
    <location>
        <position position="229"/>
    </location>
    <ligand>
        <name>dimethylallyl diphosphate</name>
        <dbReference type="ChEBI" id="CHEBI:57623"/>
    </ligand>
</feature>
<feature type="binding site" evidence="1">
    <location>
        <position position="230"/>
    </location>
    <ligand>
        <name>dimethylallyl diphosphate</name>
        <dbReference type="ChEBI" id="CHEBI:57623"/>
    </ligand>
</feature>
<feature type="binding site" evidence="1">
    <location>
        <position position="267"/>
    </location>
    <ligand>
        <name>dimethylallyl diphosphate</name>
        <dbReference type="ChEBI" id="CHEBI:57623"/>
    </ligand>
</feature>
<feature type="binding site" evidence="1">
    <location>
        <position position="284"/>
    </location>
    <ligand>
        <name>dimethylallyl diphosphate</name>
        <dbReference type="ChEBI" id="CHEBI:57623"/>
    </ligand>
</feature>
<feature type="binding site" evidence="1">
    <location>
        <position position="294"/>
    </location>
    <ligand>
        <name>dimethylallyl diphosphate</name>
        <dbReference type="ChEBI" id="CHEBI:57623"/>
    </ligand>
</feature>
<feature type="helix" evidence="6">
    <location>
        <begin position="50"/>
        <end position="68"/>
    </location>
</feature>
<feature type="strand" evidence="6">
    <location>
        <begin position="73"/>
        <end position="75"/>
    </location>
</feature>
<feature type="helix" evidence="6">
    <location>
        <begin position="76"/>
        <end position="86"/>
    </location>
</feature>
<feature type="helix" evidence="6">
    <location>
        <begin position="93"/>
        <end position="104"/>
    </location>
</feature>
<feature type="helix" evidence="6">
    <location>
        <begin position="109"/>
        <end position="112"/>
    </location>
</feature>
<feature type="helix" evidence="6">
    <location>
        <begin position="113"/>
        <end position="131"/>
    </location>
</feature>
<feature type="turn" evidence="6">
    <location>
        <begin position="133"/>
        <end position="136"/>
    </location>
</feature>
<feature type="strand" evidence="6">
    <location>
        <begin position="139"/>
        <end position="141"/>
    </location>
</feature>
<feature type="helix" evidence="6">
    <location>
        <begin position="147"/>
        <end position="149"/>
    </location>
</feature>
<feature type="helix" evidence="6">
    <location>
        <begin position="152"/>
        <end position="172"/>
    </location>
</feature>
<feature type="helix" evidence="6">
    <location>
        <begin position="182"/>
        <end position="204"/>
    </location>
</feature>
<feature type="helix" evidence="6">
    <location>
        <begin position="222"/>
        <end position="245"/>
    </location>
</feature>
<feature type="helix" evidence="6">
    <location>
        <begin position="249"/>
        <end position="272"/>
    </location>
</feature>
<feature type="helix" evidence="6">
    <location>
        <begin position="297"/>
        <end position="301"/>
    </location>
</feature>
<feature type="helix" evidence="6">
    <location>
        <begin position="303"/>
        <end position="319"/>
    </location>
</feature>
<feature type="turn" evidence="6">
    <location>
        <begin position="320"/>
        <end position="323"/>
    </location>
</feature>
<feature type="turn" evidence="6">
    <location>
        <begin position="326"/>
        <end position="329"/>
    </location>
</feature>
<feature type="helix" evidence="6">
    <location>
        <begin position="330"/>
        <end position="340"/>
    </location>
</feature>
<reference key="1">
    <citation type="journal article" date="2000" name="DNA Res.">
        <title>Structural analysis of Arabidopsis thaliana chromosome 3. II. Sequence features of the 4,251,695 bp regions covered by 90 P1, TAC and BAC clones.</title>
        <authorList>
            <person name="Kaneko T."/>
            <person name="Katoh T."/>
            <person name="Sato S."/>
            <person name="Nakamura Y."/>
            <person name="Asamizu E."/>
            <person name="Tabata S."/>
        </authorList>
    </citation>
    <scope>NUCLEOTIDE SEQUENCE [LARGE SCALE GENOMIC DNA]</scope>
    <source>
        <strain>cv. Columbia</strain>
    </source>
</reference>
<reference key="2">
    <citation type="journal article" date="2017" name="Plant J.">
        <title>Araport11: a complete reannotation of the Arabidopsis thaliana reference genome.</title>
        <authorList>
            <person name="Cheng C.Y."/>
            <person name="Krishnakumar V."/>
            <person name="Chan A.P."/>
            <person name="Thibaud-Nissen F."/>
            <person name="Schobel S."/>
            <person name="Town C.D."/>
        </authorList>
    </citation>
    <scope>GENOME REANNOTATION</scope>
    <source>
        <strain>cv. Columbia</strain>
    </source>
</reference>
<reference key="3">
    <citation type="journal article" date="2006" name="Plant Biotechnol. J.">
        <title>Simultaneous high-throughput recombinational cloning of open reading frames in closed and open configurations.</title>
        <authorList>
            <person name="Underwood B.A."/>
            <person name="Vanderhaeghen R."/>
            <person name="Whitford R."/>
            <person name="Town C.D."/>
            <person name="Hilson P."/>
        </authorList>
    </citation>
    <scope>NUCLEOTIDE SEQUENCE [LARGE SCALE MRNA]</scope>
    <source>
        <strain>cv. Columbia</strain>
    </source>
</reference>